<proteinExistence type="evidence at protein level"/>
<reference evidence="10 11" key="1">
    <citation type="journal article" date="1996" name="J. Biol. Chem.">
        <title>Rhotekin, a new putative target for Rho bearing homology to a serine/threonine kinase, PKN, and rhophilin in the rho-binding domain.</title>
        <authorList>
            <person name="Reid T."/>
            <person name="Furuyashiki T."/>
            <person name="Ishizaki T."/>
            <person name="Watanabe G."/>
            <person name="Watanabe N."/>
            <person name="Fujisawa K."/>
            <person name="Morii N."/>
            <person name="Madaule P."/>
            <person name="Narumiya S."/>
        </authorList>
    </citation>
    <scope>NUCLEOTIDE SEQUENCE [MRNA] (ISOFORM 2)</scope>
    <scope>INTERACTION WITH RHOA; RHOB AND RHOC</scope>
    <scope>TISSUE SPECIFICITY</scope>
    <source>
        <tissue evidence="11">Brain</tissue>
    </source>
</reference>
<reference evidence="10 13" key="2">
    <citation type="journal article" date="2005" name="Science">
        <title>The transcriptional landscape of the mammalian genome.</title>
        <authorList>
            <person name="Carninci P."/>
            <person name="Kasukawa T."/>
            <person name="Katayama S."/>
            <person name="Gough J."/>
            <person name="Frith M.C."/>
            <person name="Maeda N."/>
            <person name="Oyama R."/>
            <person name="Ravasi T."/>
            <person name="Lenhard B."/>
            <person name="Wells C."/>
            <person name="Kodzius R."/>
            <person name="Shimokawa K."/>
            <person name="Bajic V.B."/>
            <person name="Brenner S.E."/>
            <person name="Batalov S."/>
            <person name="Forrest A.R."/>
            <person name="Zavolan M."/>
            <person name="Davis M.J."/>
            <person name="Wilming L.G."/>
            <person name="Aidinis V."/>
            <person name="Allen J.E."/>
            <person name="Ambesi-Impiombato A."/>
            <person name="Apweiler R."/>
            <person name="Aturaliya R.N."/>
            <person name="Bailey T.L."/>
            <person name="Bansal M."/>
            <person name="Baxter L."/>
            <person name="Beisel K.W."/>
            <person name="Bersano T."/>
            <person name="Bono H."/>
            <person name="Chalk A.M."/>
            <person name="Chiu K.P."/>
            <person name="Choudhary V."/>
            <person name="Christoffels A."/>
            <person name="Clutterbuck D.R."/>
            <person name="Crowe M.L."/>
            <person name="Dalla E."/>
            <person name="Dalrymple B.P."/>
            <person name="de Bono B."/>
            <person name="Della Gatta G."/>
            <person name="di Bernardo D."/>
            <person name="Down T."/>
            <person name="Engstrom P."/>
            <person name="Fagiolini M."/>
            <person name="Faulkner G."/>
            <person name="Fletcher C.F."/>
            <person name="Fukushima T."/>
            <person name="Furuno M."/>
            <person name="Futaki S."/>
            <person name="Gariboldi M."/>
            <person name="Georgii-Hemming P."/>
            <person name="Gingeras T.R."/>
            <person name="Gojobori T."/>
            <person name="Green R.E."/>
            <person name="Gustincich S."/>
            <person name="Harbers M."/>
            <person name="Hayashi Y."/>
            <person name="Hensch T.K."/>
            <person name="Hirokawa N."/>
            <person name="Hill D."/>
            <person name="Huminiecki L."/>
            <person name="Iacono M."/>
            <person name="Ikeo K."/>
            <person name="Iwama A."/>
            <person name="Ishikawa T."/>
            <person name="Jakt M."/>
            <person name="Kanapin A."/>
            <person name="Katoh M."/>
            <person name="Kawasawa Y."/>
            <person name="Kelso J."/>
            <person name="Kitamura H."/>
            <person name="Kitano H."/>
            <person name="Kollias G."/>
            <person name="Krishnan S.P."/>
            <person name="Kruger A."/>
            <person name="Kummerfeld S.K."/>
            <person name="Kurochkin I.V."/>
            <person name="Lareau L.F."/>
            <person name="Lazarevic D."/>
            <person name="Lipovich L."/>
            <person name="Liu J."/>
            <person name="Liuni S."/>
            <person name="McWilliam S."/>
            <person name="Madan Babu M."/>
            <person name="Madera M."/>
            <person name="Marchionni L."/>
            <person name="Matsuda H."/>
            <person name="Matsuzawa S."/>
            <person name="Miki H."/>
            <person name="Mignone F."/>
            <person name="Miyake S."/>
            <person name="Morris K."/>
            <person name="Mottagui-Tabar S."/>
            <person name="Mulder N."/>
            <person name="Nakano N."/>
            <person name="Nakauchi H."/>
            <person name="Ng P."/>
            <person name="Nilsson R."/>
            <person name="Nishiguchi S."/>
            <person name="Nishikawa S."/>
            <person name="Nori F."/>
            <person name="Ohara O."/>
            <person name="Okazaki Y."/>
            <person name="Orlando V."/>
            <person name="Pang K.C."/>
            <person name="Pavan W.J."/>
            <person name="Pavesi G."/>
            <person name="Pesole G."/>
            <person name="Petrovsky N."/>
            <person name="Piazza S."/>
            <person name="Reed J."/>
            <person name="Reid J.F."/>
            <person name="Ring B.Z."/>
            <person name="Ringwald M."/>
            <person name="Rost B."/>
            <person name="Ruan Y."/>
            <person name="Salzberg S.L."/>
            <person name="Sandelin A."/>
            <person name="Schneider C."/>
            <person name="Schoenbach C."/>
            <person name="Sekiguchi K."/>
            <person name="Semple C.A."/>
            <person name="Seno S."/>
            <person name="Sessa L."/>
            <person name="Sheng Y."/>
            <person name="Shibata Y."/>
            <person name="Shimada H."/>
            <person name="Shimada K."/>
            <person name="Silva D."/>
            <person name="Sinclair B."/>
            <person name="Sperling S."/>
            <person name="Stupka E."/>
            <person name="Sugiura K."/>
            <person name="Sultana R."/>
            <person name="Takenaka Y."/>
            <person name="Taki K."/>
            <person name="Tammoja K."/>
            <person name="Tan S.L."/>
            <person name="Tang S."/>
            <person name="Taylor M.S."/>
            <person name="Tegner J."/>
            <person name="Teichmann S.A."/>
            <person name="Ueda H.R."/>
            <person name="van Nimwegen E."/>
            <person name="Verardo R."/>
            <person name="Wei C.L."/>
            <person name="Yagi K."/>
            <person name="Yamanishi H."/>
            <person name="Zabarovsky E."/>
            <person name="Zhu S."/>
            <person name="Zimmer A."/>
            <person name="Hide W."/>
            <person name="Bult C."/>
            <person name="Grimmond S.M."/>
            <person name="Teasdale R.D."/>
            <person name="Liu E.T."/>
            <person name="Brusic V."/>
            <person name="Quackenbush J."/>
            <person name="Wahlestedt C."/>
            <person name="Mattick J.S."/>
            <person name="Hume D.A."/>
            <person name="Kai C."/>
            <person name="Sasaki D."/>
            <person name="Tomaru Y."/>
            <person name="Fukuda S."/>
            <person name="Kanamori-Katayama M."/>
            <person name="Suzuki M."/>
            <person name="Aoki J."/>
            <person name="Arakawa T."/>
            <person name="Iida J."/>
            <person name="Imamura K."/>
            <person name="Itoh M."/>
            <person name="Kato T."/>
            <person name="Kawaji H."/>
            <person name="Kawagashira N."/>
            <person name="Kawashima T."/>
            <person name="Kojima M."/>
            <person name="Kondo S."/>
            <person name="Konno H."/>
            <person name="Nakano K."/>
            <person name="Ninomiya N."/>
            <person name="Nishio T."/>
            <person name="Okada M."/>
            <person name="Plessy C."/>
            <person name="Shibata K."/>
            <person name="Shiraki T."/>
            <person name="Suzuki S."/>
            <person name="Tagami M."/>
            <person name="Waki K."/>
            <person name="Watahiki A."/>
            <person name="Okamura-Oho Y."/>
            <person name="Suzuki H."/>
            <person name="Kawai J."/>
            <person name="Hayashizaki Y."/>
        </authorList>
    </citation>
    <scope>NUCLEOTIDE SEQUENCE [LARGE SCALE MRNA] (ISOFORM 1)</scope>
    <source>
        <strain evidence="13">C57BL/6J</strain>
        <tissue evidence="13">Head</tissue>
    </source>
</reference>
<reference key="3">
    <citation type="journal article" date="2009" name="PLoS Biol.">
        <title>Lineage-specific biology revealed by a finished genome assembly of the mouse.</title>
        <authorList>
            <person name="Church D.M."/>
            <person name="Goodstadt L."/>
            <person name="Hillier L.W."/>
            <person name="Zody M.C."/>
            <person name="Goldstein S."/>
            <person name="She X."/>
            <person name="Bult C.J."/>
            <person name="Agarwala R."/>
            <person name="Cherry J.L."/>
            <person name="DiCuccio M."/>
            <person name="Hlavina W."/>
            <person name="Kapustin Y."/>
            <person name="Meric P."/>
            <person name="Maglott D."/>
            <person name="Birtle Z."/>
            <person name="Marques A.C."/>
            <person name="Graves T."/>
            <person name="Zhou S."/>
            <person name="Teague B."/>
            <person name="Potamousis K."/>
            <person name="Churas C."/>
            <person name="Place M."/>
            <person name="Herschleb J."/>
            <person name="Runnheim R."/>
            <person name="Forrest D."/>
            <person name="Amos-Landgraf J."/>
            <person name="Schwartz D.C."/>
            <person name="Cheng Z."/>
            <person name="Lindblad-Toh K."/>
            <person name="Eichler E.E."/>
            <person name="Ponting C.P."/>
        </authorList>
    </citation>
    <scope>NUCLEOTIDE SEQUENCE [LARGE SCALE GENOMIC DNA]</scope>
    <source>
        <strain>C57BL/6J</strain>
    </source>
</reference>
<reference evidence="10 12" key="4">
    <citation type="journal article" date="2004" name="Genome Res.">
        <title>The status, quality, and expansion of the NIH full-length cDNA project: the Mammalian Gene Collection (MGC).</title>
        <authorList>
            <consortium name="The MGC Project Team"/>
        </authorList>
    </citation>
    <scope>NUCLEOTIDE SEQUENCE [LARGE SCALE MRNA] (ISOFORM 2)</scope>
    <source>
        <strain evidence="12">FVB/N</strain>
        <tissue evidence="12">Mammary gland</tissue>
    </source>
</reference>
<reference key="5">
    <citation type="journal article" date="2010" name="Cell">
        <title>A tissue-specific atlas of mouse protein phosphorylation and expression.</title>
        <authorList>
            <person name="Huttlin E.L."/>
            <person name="Jedrychowski M.P."/>
            <person name="Elias J.E."/>
            <person name="Goswami T."/>
            <person name="Rad R."/>
            <person name="Beausoleil S.A."/>
            <person name="Villen J."/>
            <person name="Haas W."/>
            <person name="Sowa M.E."/>
            <person name="Gygi S.P."/>
        </authorList>
    </citation>
    <scope>IDENTIFICATION BY MASS SPECTROMETRY [LARGE SCALE ANALYSIS]</scope>
    <source>
        <tissue>Brain</tissue>
        <tissue>Heart</tissue>
        <tissue>Kidney</tissue>
        <tissue>Lung</tissue>
    </source>
</reference>
<reference key="6">
    <citation type="journal article" date="2014" name="Mol. Cell. Proteomics">
        <title>Immunoaffinity enrichment and mass spectrometry analysis of protein methylation.</title>
        <authorList>
            <person name="Guo A."/>
            <person name="Gu H."/>
            <person name="Zhou J."/>
            <person name="Mulhern D."/>
            <person name="Wang Y."/>
            <person name="Lee K.A."/>
            <person name="Yang V."/>
            <person name="Aguiar M."/>
            <person name="Kornhauser J."/>
            <person name="Jia X."/>
            <person name="Ren J."/>
            <person name="Beausoleil S.A."/>
            <person name="Silva J.C."/>
            <person name="Vemulapalli V."/>
            <person name="Bedford M.T."/>
            <person name="Comb M.J."/>
        </authorList>
    </citation>
    <scope>METHYLATION [LARGE SCALE ANALYSIS] AT ARG-230</scope>
    <scope>IDENTIFICATION BY MASS SPECTROMETRY [LARGE SCALE ANALYSIS]</scope>
    <source>
        <tissue>Brain</tissue>
    </source>
</reference>
<evidence type="ECO:0000250" key="1"/>
<evidence type="ECO:0000250" key="2">
    <source>
        <dbReference type="UniProtKB" id="Q9BST9"/>
    </source>
</evidence>
<evidence type="ECO:0000255" key="3"/>
<evidence type="ECO:0000255" key="4">
    <source>
        <dbReference type="PROSITE-ProRule" id="PRU01207"/>
    </source>
</evidence>
<evidence type="ECO:0000256" key="5">
    <source>
        <dbReference type="SAM" id="MobiDB-lite"/>
    </source>
</evidence>
<evidence type="ECO:0000269" key="6">
    <source>
    </source>
</evidence>
<evidence type="ECO:0000269" key="7">
    <source>
    </source>
</evidence>
<evidence type="ECO:0000303" key="8">
    <source>
    </source>
</evidence>
<evidence type="ECO:0000303" key="9">
    <source>
    </source>
</evidence>
<evidence type="ECO:0000305" key="10"/>
<evidence type="ECO:0000312" key="11">
    <source>
        <dbReference type="EMBL" id="AAC52605.1"/>
    </source>
</evidence>
<evidence type="ECO:0000312" key="12">
    <source>
        <dbReference type="EMBL" id="AAH13820.1"/>
    </source>
</evidence>
<evidence type="ECO:0000312" key="13">
    <source>
        <dbReference type="EMBL" id="BAC36222.1"/>
    </source>
</evidence>
<evidence type="ECO:0000312" key="14">
    <source>
        <dbReference type="MGI" id="MGI:107371"/>
    </source>
</evidence>
<evidence type="ECO:0007744" key="15">
    <source>
    </source>
</evidence>
<comment type="function">
    <text evidence="1">Mediates Rho signaling to activate NF-kappa-B and may confer increased resistance to apoptosis to cells in gastric tumorigenesis. May play a novel role in the organization of septin structures (By similarity).</text>
</comment>
<comment type="subunit">
    <text evidence="2 7">Interacts via its C-terminal region with the TAX1BP3 PDZ domain. This interaction facilitates Rho-mediated activation of the c-Fos serum response element (SRE). Interacts with SEPT9 (By similarity). Specifically binds to GTP-bound RHOA, RHOB and RHOC and inhibits their GTPase activity.</text>
</comment>
<comment type="interaction">
    <interactant intactId="EBI-1162441">
        <id>Q8C6B2</id>
    </interactant>
    <interactant intactId="EBI-643583">
        <id>Q9QUI0</id>
        <label>Rhoa</label>
    </interactant>
    <organismsDiffer>false</organismsDiffer>
    <experiments>3</experiments>
</comment>
<comment type="interaction">
    <interactant intactId="EBI-1162441">
        <id>Q8C6B2</id>
    </interactant>
    <interactant intactId="EBI-446668">
        <id>P61586</id>
        <label>RHOA</label>
    </interactant>
    <organismsDiffer>true</organismsDiffer>
    <experiments>4</experiments>
</comment>
<comment type="alternative products">
    <event type="alternative splicing"/>
    <isoform>
        <id>Q8C6B2-1</id>
        <name evidence="6">1</name>
        <sequence type="displayed"/>
    </isoform>
    <isoform>
        <id>Q8C6B2-2</id>
        <name evidence="7">2</name>
        <sequence type="described" ref="VSP_052006"/>
    </isoform>
</comment>
<comment type="tissue specificity">
    <text evidence="7">Abundantly expressed in brain and kidney. Weakly expressed in lung, testis, skeletal muscle, heart and thymus.</text>
</comment>
<organism>
    <name type="scientific">Mus musculus</name>
    <name type="common">Mouse</name>
    <dbReference type="NCBI Taxonomy" id="10090"/>
    <lineage>
        <taxon>Eukaryota</taxon>
        <taxon>Metazoa</taxon>
        <taxon>Chordata</taxon>
        <taxon>Craniata</taxon>
        <taxon>Vertebrata</taxon>
        <taxon>Euteleostomi</taxon>
        <taxon>Mammalia</taxon>
        <taxon>Eutheria</taxon>
        <taxon>Euarchontoglires</taxon>
        <taxon>Glires</taxon>
        <taxon>Rodentia</taxon>
        <taxon>Myomorpha</taxon>
        <taxon>Muroidea</taxon>
        <taxon>Muridae</taxon>
        <taxon>Murinae</taxon>
        <taxon>Mus</taxon>
        <taxon>Mus</taxon>
    </lineage>
</organism>
<accession>Q8C6B2</accession>
<accession>E9QM24</accession>
<accession>Q61192</accession>
<accession>Q8VIG7</accession>
<sequence length="564" mass="63013">MFSRNHRSRITVARGSALEMEFKRGRFRLSFFSESPEDTELQRKLDHEIRMRDGACKLLAACSQREQALEATKSLLVCNSRILSYMGELQRRKEAQVLEKTGRRPSDSVQPAQHSPCRGRVCISDLRIPLMWKDTEYFKNKGDLHRWAVFLLLQIGEQIQDTEMVLVDRTLTDISFQNNVLFAEAEPDFELRLELYGACVEEEGALAGAPKRLATKLSSSLGRSSGKRVRASLDSAGASGNSPVLLPTPAVGGPRFHLLAHTTLTLEEVQDGFRTHDLTLTSHEENPAWLPLYGSVCCRLAAQPLCMIQPTASGALRVQQAGELQNGTLVHGVLKGTNLFCYWRSEDADTGQEPLFTIVINKETRVRAGELEQAPEWPFTLSISNKYGDDEVTNTLQLESREALQNWMEALWQLFFDMSQWRHCCDEVMKIETPAPRKPPQALAKQGSLYHEMAIEPLDDIAAVTDILAQREGTRLEPSPPWLAMFTDQPALPSSCSPASVAPVPTWMQPLPWGRPRTFSLDAAPADHSLGPSRSVAPLPPQRSPKSRGFYSKSQLGPWLQSPV</sequence>
<keyword id="KW-0025">Alternative splicing</keyword>
<keyword id="KW-0053">Apoptosis</keyword>
<keyword id="KW-0175">Coiled coil</keyword>
<keyword id="KW-0342">GTP-binding</keyword>
<keyword id="KW-0488">Methylation</keyword>
<keyword id="KW-0547">Nucleotide-binding</keyword>
<keyword id="KW-0597">Phosphoprotein</keyword>
<keyword id="KW-1185">Reference proteome</keyword>
<gene>
    <name evidence="14" type="primary">Rtkn</name>
</gene>
<protein>
    <recommendedName>
        <fullName>Rhotekin</fullName>
    </recommendedName>
</protein>
<dbReference type="EMBL" id="U54638">
    <property type="protein sequence ID" value="AAC52605.1"/>
    <property type="molecule type" value="mRNA"/>
</dbReference>
<dbReference type="EMBL" id="AK076155">
    <property type="protein sequence ID" value="BAC36222.1"/>
    <property type="molecule type" value="mRNA"/>
</dbReference>
<dbReference type="EMBL" id="AC104324">
    <property type="status" value="NOT_ANNOTATED_CDS"/>
    <property type="molecule type" value="Genomic_DNA"/>
</dbReference>
<dbReference type="EMBL" id="BC013820">
    <property type="protein sequence ID" value="AAH13820.1"/>
    <property type="molecule type" value="mRNA"/>
</dbReference>
<dbReference type="CCDS" id="CCDS20274.1">
    <molecule id="Q8C6B2-2"/>
</dbReference>
<dbReference type="CCDS" id="CCDS51817.1">
    <molecule id="Q8C6B2-1"/>
</dbReference>
<dbReference type="RefSeq" id="NP_001129699.1">
    <molecule id="Q8C6B2-1"/>
    <property type="nucleotide sequence ID" value="NM_001136227.2"/>
</dbReference>
<dbReference type="RefSeq" id="NP_033132.2">
    <molecule id="Q8C6B2-2"/>
    <property type="nucleotide sequence ID" value="NM_009106.3"/>
</dbReference>
<dbReference type="RefSeq" id="NP_598396.2">
    <molecule id="Q8C6B2-2"/>
    <property type="nucleotide sequence ID" value="NM_133641.3"/>
</dbReference>
<dbReference type="SMR" id="Q8C6B2"/>
<dbReference type="BioGRID" id="203032">
    <property type="interactions" value="6"/>
</dbReference>
<dbReference type="DIP" id="DIP-29983N"/>
<dbReference type="FunCoup" id="Q8C6B2">
    <property type="interactions" value="92"/>
</dbReference>
<dbReference type="IntAct" id="Q8C6B2">
    <property type="interactions" value="5"/>
</dbReference>
<dbReference type="MINT" id="Q8C6B2"/>
<dbReference type="STRING" id="10090.ENSMUSP00000065571"/>
<dbReference type="GlyGen" id="Q8C6B2">
    <property type="glycosylation" value="2 sites"/>
</dbReference>
<dbReference type="iPTMnet" id="Q8C6B2"/>
<dbReference type="PhosphoSitePlus" id="Q8C6B2"/>
<dbReference type="jPOST" id="Q8C6B2"/>
<dbReference type="PaxDb" id="10090-ENSMUSP00000065571"/>
<dbReference type="PeptideAtlas" id="Q8C6B2"/>
<dbReference type="ProteomicsDB" id="257053">
    <molecule id="Q8C6B2-1"/>
</dbReference>
<dbReference type="ProteomicsDB" id="257054">
    <molecule id="Q8C6B2-2"/>
</dbReference>
<dbReference type="Pumba" id="Q8C6B2"/>
<dbReference type="Antibodypedia" id="31499">
    <property type="antibodies" value="253 antibodies from 32 providers"/>
</dbReference>
<dbReference type="Ensembl" id="ENSMUST00000065512.11">
    <molecule id="Q8C6B2-1"/>
    <property type="protein sequence ID" value="ENSMUSP00000065571.5"/>
    <property type="gene ID" value="ENSMUSG00000034930.17"/>
</dbReference>
<dbReference type="Ensembl" id="ENSMUST00000087938.11">
    <molecule id="Q8C6B2-2"/>
    <property type="protein sequence ID" value="ENSMUSP00000085249.5"/>
    <property type="gene ID" value="ENSMUSG00000034930.17"/>
</dbReference>
<dbReference type="Ensembl" id="ENSMUST00000121093.8">
    <molecule id="Q8C6B2-2"/>
    <property type="protein sequence ID" value="ENSMUSP00000112501.2"/>
    <property type="gene ID" value="ENSMUSG00000034930.17"/>
</dbReference>
<dbReference type="GeneID" id="20166"/>
<dbReference type="KEGG" id="mmu:20166"/>
<dbReference type="UCSC" id="uc009cms.2">
    <molecule id="Q8C6B2-1"/>
    <property type="organism name" value="mouse"/>
</dbReference>
<dbReference type="UCSC" id="uc009cmt.2">
    <molecule id="Q8C6B2-2"/>
    <property type="organism name" value="mouse"/>
</dbReference>
<dbReference type="AGR" id="MGI:107371"/>
<dbReference type="CTD" id="6242"/>
<dbReference type="MGI" id="MGI:107371">
    <property type="gene designation" value="Rtkn"/>
</dbReference>
<dbReference type="VEuPathDB" id="HostDB:ENSMUSG00000034930"/>
<dbReference type="eggNOG" id="ENOG502QRWR">
    <property type="taxonomic scope" value="Eukaryota"/>
</dbReference>
<dbReference type="GeneTree" id="ENSGT00940000158491"/>
<dbReference type="HOGENOM" id="CLU_025066_1_0_1"/>
<dbReference type="InParanoid" id="Q8C6B2"/>
<dbReference type="OMA" id="CMTQPSA"/>
<dbReference type="OrthoDB" id="5817051at2759"/>
<dbReference type="PhylomeDB" id="Q8C6B2"/>
<dbReference type="TreeFam" id="TF331476"/>
<dbReference type="Reactome" id="R-MMU-5666185">
    <property type="pathway name" value="RHO GTPases Activate Rhotekin and Rhophilins"/>
</dbReference>
<dbReference type="Reactome" id="R-MMU-8980692">
    <property type="pathway name" value="RHOA GTPase cycle"/>
</dbReference>
<dbReference type="Reactome" id="R-MMU-9013026">
    <property type="pathway name" value="RHOB GTPase cycle"/>
</dbReference>
<dbReference type="Reactome" id="R-MMU-9013106">
    <property type="pathway name" value="RHOC GTPase cycle"/>
</dbReference>
<dbReference type="BioGRID-ORCS" id="20166">
    <property type="hits" value="3 hits in 77 CRISPR screens"/>
</dbReference>
<dbReference type="PRO" id="PR:Q8C6B2"/>
<dbReference type="Proteomes" id="UP000000589">
    <property type="component" value="Chromosome 6"/>
</dbReference>
<dbReference type="RNAct" id="Q8C6B2">
    <property type="molecule type" value="protein"/>
</dbReference>
<dbReference type="Bgee" id="ENSMUSG00000034930">
    <property type="expression patterns" value="Expressed in superior frontal gyrus and 235 other cell types or tissues"/>
</dbReference>
<dbReference type="ExpressionAtlas" id="Q8C6B2">
    <property type="expression patterns" value="baseline and differential"/>
</dbReference>
<dbReference type="GO" id="GO:0005829">
    <property type="term" value="C:cytosol"/>
    <property type="evidence" value="ECO:0000304"/>
    <property type="project" value="Reactome"/>
</dbReference>
<dbReference type="GO" id="GO:0005525">
    <property type="term" value="F:GTP binding"/>
    <property type="evidence" value="ECO:0007669"/>
    <property type="project" value="UniProtKB-KW"/>
</dbReference>
<dbReference type="GO" id="GO:0005095">
    <property type="term" value="F:GTPase inhibitor activity"/>
    <property type="evidence" value="ECO:0000314"/>
    <property type="project" value="UniProtKB"/>
</dbReference>
<dbReference type="GO" id="GO:0031267">
    <property type="term" value="F:small GTPase binding"/>
    <property type="evidence" value="ECO:0000314"/>
    <property type="project" value="UniProtKB"/>
</dbReference>
<dbReference type="GO" id="GO:0006915">
    <property type="term" value="P:apoptotic process"/>
    <property type="evidence" value="ECO:0007669"/>
    <property type="project" value="UniProtKB-KW"/>
</dbReference>
<dbReference type="GO" id="GO:0042981">
    <property type="term" value="P:regulation of apoptotic process"/>
    <property type="evidence" value="ECO:0000250"/>
    <property type="project" value="UniProtKB"/>
</dbReference>
<dbReference type="GO" id="GO:0007266">
    <property type="term" value="P:Rho protein signal transduction"/>
    <property type="evidence" value="ECO:0000250"/>
    <property type="project" value="UniProtKB"/>
</dbReference>
<dbReference type="InterPro" id="IPR012966">
    <property type="entry name" value="AHD"/>
</dbReference>
<dbReference type="InterPro" id="IPR051364">
    <property type="entry name" value="Cytokinesis/Rho-signaling"/>
</dbReference>
<dbReference type="InterPro" id="IPR011072">
    <property type="entry name" value="HR1_rho-bd"/>
</dbReference>
<dbReference type="InterPro" id="IPR001849">
    <property type="entry name" value="PH_domain"/>
</dbReference>
<dbReference type="PANTHER" id="PTHR21538">
    <property type="entry name" value="ANILLIN/RHOTEKIN RTKN"/>
    <property type="match status" value="1"/>
</dbReference>
<dbReference type="PANTHER" id="PTHR21538:SF19">
    <property type="entry name" value="RHOTEKIN"/>
    <property type="match status" value="1"/>
</dbReference>
<dbReference type="Pfam" id="PF08174">
    <property type="entry name" value="Anillin"/>
    <property type="match status" value="1"/>
</dbReference>
<dbReference type="SMART" id="SM00742">
    <property type="entry name" value="Hr1"/>
    <property type="match status" value="1"/>
</dbReference>
<dbReference type="SMART" id="SM00233">
    <property type="entry name" value="PH"/>
    <property type="match status" value="1"/>
</dbReference>
<dbReference type="SUPFAM" id="SSF50729">
    <property type="entry name" value="PH domain-like"/>
    <property type="match status" value="1"/>
</dbReference>
<dbReference type="PROSITE" id="PS51860">
    <property type="entry name" value="REM_1"/>
    <property type="match status" value="1"/>
</dbReference>
<name>RTKN_MOUSE</name>
<feature type="chain" id="PRO_0000233941" description="Rhotekin">
    <location>
        <begin position="1"/>
        <end position="564"/>
    </location>
</feature>
<feature type="domain" description="REM-1" evidence="4">
    <location>
        <begin position="17"/>
        <end position="98"/>
    </location>
</feature>
<feature type="domain" description="PH" evidence="3">
    <location>
        <begin position="309"/>
        <end position="416"/>
    </location>
</feature>
<feature type="region of interest" description="Disordered" evidence="5">
    <location>
        <begin position="518"/>
        <end position="564"/>
    </location>
</feature>
<feature type="modified residue" description="Omega-N-methylarginine" evidence="2">
    <location>
        <position position="14"/>
    </location>
</feature>
<feature type="modified residue" description="Phosphoserine" evidence="2">
    <location>
        <position position="30"/>
    </location>
</feature>
<feature type="modified residue" description="Phosphoserine" evidence="2">
    <location>
        <position position="106"/>
    </location>
</feature>
<feature type="modified residue" description="Asymmetric dimethylarginine" evidence="15">
    <location>
        <position position="230"/>
    </location>
</feature>
<feature type="modified residue" description="Phosphoserine" evidence="2">
    <location>
        <position position="232"/>
    </location>
</feature>
<feature type="modified residue" description="Phosphoserine" evidence="2">
    <location>
        <position position="520"/>
    </location>
</feature>
<feature type="modified residue" description="Phosphoserine" evidence="2">
    <location>
        <position position="529"/>
    </location>
</feature>
<feature type="modified residue" description="Phosphoserine" evidence="2">
    <location>
        <position position="544"/>
    </location>
</feature>
<feature type="splice variant" id="VSP_052006" description="In isoform 2." evidence="8 9">
    <original>MFSRNHRSRITVARGSALEMEFKRGRFRLSFFSESP</original>
    <variation>MQDRLRILEDLNMLYIRQMALSL</variation>
    <location>
        <begin position="1"/>
        <end position="36"/>
    </location>
</feature>
<feature type="sequence conflict" description="In Ref. 2; BAC36222." evidence="10" ref="2">
    <original>Q</original>
    <variation>L</variation>
    <location>
        <position position="67"/>
    </location>
</feature>
<feature type="sequence conflict" description="In Ref. 4; AAH13820." evidence="10" ref="4">
    <original>R</original>
    <variation>G</variation>
    <location>
        <position position="365"/>
    </location>
</feature>
<feature type="sequence conflict" description="In Ref. 1; AAC52605 and 4; AAH13820." evidence="10" ref="1 4">
    <original>A</original>
    <variation>V</variation>
    <location>
        <position position="444"/>
    </location>
</feature>